<dbReference type="EMBL" id="Z92952">
    <property type="protein sequence ID" value="CAB07449.1"/>
    <property type="molecule type" value="Genomic_DNA"/>
</dbReference>
<dbReference type="EMBL" id="AL009126">
    <property type="protein sequence ID" value="CAB15635.1"/>
    <property type="molecule type" value="Genomic_DNA"/>
</dbReference>
<dbReference type="PIR" id="F70067">
    <property type="entry name" value="F70067"/>
</dbReference>
<dbReference type="RefSeq" id="WP_003243602.1">
    <property type="nucleotide sequence ID" value="NZ_OZ025638.1"/>
</dbReference>
<dbReference type="SMR" id="P96723"/>
<dbReference type="FunCoup" id="P96723">
    <property type="interactions" value="5"/>
</dbReference>
<dbReference type="STRING" id="224308.BSU36180"/>
<dbReference type="PaxDb" id="224308-BSU36180"/>
<dbReference type="EnsemblBacteria" id="CAB15635">
    <property type="protein sequence ID" value="CAB15635"/>
    <property type="gene ID" value="BSU_36180"/>
</dbReference>
<dbReference type="GeneID" id="936888"/>
<dbReference type="KEGG" id="bsu:BSU36180"/>
<dbReference type="PATRIC" id="fig|224308.179.peg.3915"/>
<dbReference type="eggNOG" id="COG2849">
    <property type="taxonomic scope" value="Bacteria"/>
</dbReference>
<dbReference type="InParanoid" id="P96723"/>
<dbReference type="OrthoDB" id="517576at2"/>
<dbReference type="BioCyc" id="BSUB:BSU36180-MONOMER"/>
<dbReference type="Proteomes" id="UP000001570">
    <property type="component" value="Chromosome"/>
</dbReference>
<dbReference type="GO" id="GO:0005737">
    <property type="term" value="C:cytoplasm"/>
    <property type="evidence" value="ECO:0007669"/>
    <property type="project" value="UniProtKB-SubCell"/>
</dbReference>
<dbReference type="GO" id="GO:0090729">
    <property type="term" value="F:toxin activity"/>
    <property type="evidence" value="ECO:0007669"/>
    <property type="project" value="UniProtKB-KW"/>
</dbReference>
<dbReference type="Gene3D" id="2.20.110.10">
    <property type="entry name" value="Histone H3 K4-specific methyltransferase SET7/9 N-terminal domain"/>
    <property type="match status" value="1"/>
</dbReference>
<dbReference type="InterPro" id="IPR011652">
    <property type="entry name" value="MORN_2"/>
</dbReference>
<dbReference type="Pfam" id="PF07661">
    <property type="entry name" value="MORN_2"/>
    <property type="match status" value="2"/>
</dbReference>
<dbReference type="SUPFAM" id="SSF82185">
    <property type="entry name" value="Histone H3 K4-specific methyltransferase SET7/9 N-terminal domain"/>
    <property type="match status" value="1"/>
</dbReference>
<accession>P96723</accession>
<accession>Q795B7</accession>
<organism>
    <name type="scientific">Bacillus subtilis (strain 168)</name>
    <dbReference type="NCBI Taxonomy" id="224308"/>
    <lineage>
        <taxon>Bacteria</taxon>
        <taxon>Bacillati</taxon>
        <taxon>Bacillota</taxon>
        <taxon>Bacilli</taxon>
        <taxon>Bacillales</taxon>
        <taxon>Bacillaceae</taxon>
        <taxon>Bacillus</taxon>
    </lineage>
</organism>
<gene>
    <name type="primary">ywqK</name>
    <name type="ordered locus">BSU36180</name>
</gene>
<feature type="chain" id="PRO_0000375915" description="Immunity protein YwqK">
    <location>
        <begin position="1"/>
        <end position="154"/>
    </location>
</feature>
<evidence type="ECO:0000269" key="1">
    <source>
    </source>
</evidence>
<evidence type="ECO:0000305" key="2"/>
<evidence type="ECO:0000305" key="3">
    <source>
    </source>
</evidence>
<comment type="function">
    <text evidence="1 3">Immunity component of one of 6 LXG toxin-immunity modules in this strain. They promote kin selection, mediate competition in biofilms, and drive spatial segregation of different strains, indicating that LXG toxins may help avoid warfare between strains in biofilms. Mediates intercellular competition during biofilm formation; disruption of the operon disadvantages the bacteria, but overexpression of the cognate immunity protein restores growth in competition with wild-type. In situ neutralizes the toxic effect of cognate toxin YqcG (PubMed:34280190). Probably neutralizes the ability to inhibit growth of cognate toxin YwqJ. Probably does not have immunity protein activity on other LXG toxins (Probable).</text>
</comment>
<comment type="subunit">
    <text evidence="3">Probably interacts with cognate toxin YwqJ but not with other non-cognate LXG toxins. The interaction inhibits the toxic activity of YwqJ.</text>
</comment>
<comment type="subcellular location">
    <subcellularLocation>
        <location evidence="2">Cytoplasm</location>
    </subcellularLocation>
</comment>
<comment type="induction">
    <text evidence="1">Expressed on rich and minimal solid media likely in early stationary phase; dependent on DegSU. Not expressed in liquid LB, but only under conditions that promote biofilm formation.</text>
</comment>
<comment type="disruption phenotype">
    <text evidence="1">Deletion of the ywqH-ywqI-ywqJ-ywqK-nfi operon has no visible growth phenotype, however it is out-competed by wild-type cells.</text>
</comment>
<name>YWQK_BACSU</name>
<sequence length="154" mass="18217">MENEYDMKSIKEKGVDFEDLWFSSVSDEILDNPEDENGQPFTGLAYELYPNGQIIYFTKYKNGLAHGLTCEFYENGNKKSEKEYRYGQLHGISIIWFENGRKKSEQQYEHSILISEKNWDEEGNLLNKYEIDTDSPHFEILESRRETHINLGRE</sequence>
<reference key="1">
    <citation type="journal article" date="1997" name="Microbiology">
        <title>The Bacillus subtilis genome from gerBC (311 degrees) to licR (334 degrees).</title>
        <authorList>
            <person name="Presecan E."/>
            <person name="Moszer I."/>
            <person name="Boursier L."/>
            <person name="Cruz Ramos H."/>
            <person name="De La Fuente V."/>
            <person name="Hullo M.-F."/>
            <person name="Lelong C."/>
            <person name="Schleich S."/>
            <person name="Sekowska A."/>
            <person name="Song B.H."/>
            <person name="Villani G."/>
            <person name="Kunst F."/>
            <person name="Danchin A."/>
            <person name="Glaser P."/>
        </authorList>
    </citation>
    <scope>NUCLEOTIDE SEQUENCE [GENOMIC DNA]</scope>
    <source>
        <strain>168</strain>
    </source>
</reference>
<reference key="2">
    <citation type="journal article" date="1997" name="Nature">
        <title>The complete genome sequence of the Gram-positive bacterium Bacillus subtilis.</title>
        <authorList>
            <person name="Kunst F."/>
            <person name="Ogasawara N."/>
            <person name="Moszer I."/>
            <person name="Albertini A.M."/>
            <person name="Alloni G."/>
            <person name="Azevedo V."/>
            <person name="Bertero M.G."/>
            <person name="Bessieres P."/>
            <person name="Bolotin A."/>
            <person name="Borchert S."/>
            <person name="Borriss R."/>
            <person name="Boursier L."/>
            <person name="Brans A."/>
            <person name="Braun M."/>
            <person name="Brignell S.C."/>
            <person name="Bron S."/>
            <person name="Brouillet S."/>
            <person name="Bruschi C.V."/>
            <person name="Caldwell B."/>
            <person name="Capuano V."/>
            <person name="Carter N.M."/>
            <person name="Choi S.-K."/>
            <person name="Codani J.-J."/>
            <person name="Connerton I.F."/>
            <person name="Cummings N.J."/>
            <person name="Daniel R.A."/>
            <person name="Denizot F."/>
            <person name="Devine K.M."/>
            <person name="Duesterhoeft A."/>
            <person name="Ehrlich S.D."/>
            <person name="Emmerson P.T."/>
            <person name="Entian K.-D."/>
            <person name="Errington J."/>
            <person name="Fabret C."/>
            <person name="Ferrari E."/>
            <person name="Foulger D."/>
            <person name="Fritz C."/>
            <person name="Fujita M."/>
            <person name="Fujita Y."/>
            <person name="Fuma S."/>
            <person name="Galizzi A."/>
            <person name="Galleron N."/>
            <person name="Ghim S.-Y."/>
            <person name="Glaser P."/>
            <person name="Goffeau A."/>
            <person name="Golightly E.J."/>
            <person name="Grandi G."/>
            <person name="Guiseppi G."/>
            <person name="Guy B.J."/>
            <person name="Haga K."/>
            <person name="Haiech J."/>
            <person name="Harwood C.R."/>
            <person name="Henaut A."/>
            <person name="Hilbert H."/>
            <person name="Holsappel S."/>
            <person name="Hosono S."/>
            <person name="Hullo M.-F."/>
            <person name="Itaya M."/>
            <person name="Jones L.-M."/>
            <person name="Joris B."/>
            <person name="Karamata D."/>
            <person name="Kasahara Y."/>
            <person name="Klaerr-Blanchard M."/>
            <person name="Klein C."/>
            <person name="Kobayashi Y."/>
            <person name="Koetter P."/>
            <person name="Koningstein G."/>
            <person name="Krogh S."/>
            <person name="Kumano M."/>
            <person name="Kurita K."/>
            <person name="Lapidus A."/>
            <person name="Lardinois S."/>
            <person name="Lauber J."/>
            <person name="Lazarevic V."/>
            <person name="Lee S.-M."/>
            <person name="Levine A."/>
            <person name="Liu H."/>
            <person name="Masuda S."/>
            <person name="Mauel C."/>
            <person name="Medigue C."/>
            <person name="Medina N."/>
            <person name="Mellado R.P."/>
            <person name="Mizuno M."/>
            <person name="Moestl D."/>
            <person name="Nakai S."/>
            <person name="Noback M."/>
            <person name="Noone D."/>
            <person name="O'Reilly M."/>
            <person name="Ogawa K."/>
            <person name="Ogiwara A."/>
            <person name="Oudega B."/>
            <person name="Park S.-H."/>
            <person name="Parro V."/>
            <person name="Pohl T.M."/>
            <person name="Portetelle D."/>
            <person name="Porwollik S."/>
            <person name="Prescott A.M."/>
            <person name="Presecan E."/>
            <person name="Pujic P."/>
            <person name="Purnelle B."/>
            <person name="Rapoport G."/>
            <person name="Rey M."/>
            <person name="Reynolds S."/>
            <person name="Rieger M."/>
            <person name="Rivolta C."/>
            <person name="Rocha E."/>
            <person name="Roche B."/>
            <person name="Rose M."/>
            <person name="Sadaie Y."/>
            <person name="Sato T."/>
            <person name="Scanlan E."/>
            <person name="Schleich S."/>
            <person name="Schroeter R."/>
            <person name="Scoffone F."/>
            <person name="Sekiguchi J."/>
            <person name="Sekowska A."/>
            <person name="Seror S.J."/>
            <person name="Serror P."/>
            <person name="Shin B.-S."/>
            <person name="Soldo B."/>
            <person name="Sorokin A."/>
            <person name="Tacconi E."/>
            <person name="Takagi T."/>
            <person name="Takahashi H."/>
            <person name="Takemaru K."/>
            <person name="Takeuchi M."/>
            <person name="Tamakoshi A."/>
            <person name="Tanaka T."/>
            <person name="Terpstra P."/>
            <person name="Tognoni A."/>
            <person name="Tosato V."/>
            <person name="Uchiyama S."/>
            <person name="Vandenbol M."/>
            <person name="Vannier F."/>
            <person name="Vassarotti A."/>
            <person name="Viari A."/>
            <person name="Wambutt R."/>
            <person name="Wedler E."/>
            <person name="Wedler H."/>
            <person name="Weitzenegger T."/>
            <person name="Winters P."/>
            <person name="Wipat A."/>
            <person name="Yamamoto H."/>
            <person name="Yamane K."/>
            <person name="Yasumoto K."/>
            <person name="Yata K."/>
            <person name="Yoshida K."/>
            <person name="Yoshikawa H.-F."/>
            <person name="Zumstein E."/>
            <person name="Yoshikawa H."/>
            <person name="Danchin A."/>
        </authorList>
    </citation>
    <scope>NUCLEOTIDE SEQUENCE [LARGE SCALE GENOMIC DNA]</scope>
    <source>
        <strain>168</strain>
    </source>
</reference>
<reference key="3">
    <citation type="journal article" date="2012" name="FEBS Lett.">
        <title>A novel family of toxin/antitoxin proteins in Bacillus species.</title>
        <authorList>
            <person name="Holberger L.E."/>
            <person name="Garza-Sanchez F."/>
            <person name="Lamoureux J."/>
            <person name="Low D.A."/>
            <person name="Hayes C.S."/>
        </authorList>
    </citation>
    <scope>PROBABLE FUNCTION AS AN IMMUNITY PROTEIN</scope>
    <scope>PROBABLE SUBUNIT</scope>
    <source>
        <strain>168</strain>
    </source>
</reference>
<reference key="4">
    <citation type="journal article" date="2021" name="PLoS Genet.">
        <title>Diverse LXG toxin and antitoxin systems specifically mediate intraspecies competition in Bacillus subtilis biofilms.</title>
        <authorList>
            <person name="Kobayashi K."/>
        </authorList>
    </citation>
    <scope>FUNCTION AS AN IMMUNITY PROTEIN</scope>
    <scope>INDUCTION</scope>
    <scope>DISRUPTION PHENOTYPE</scope>
    <source>
        <strain>168 / Marburg / ATCC 6051 / DSM 10 / JCM 1465 / NBRC 13719 / NCIMB 3610 / NRRL NRS-744 / VKM B-501</strain>
    </source>
</reference>
<protein>
    <recommendedName>
        <fullName>Immunity protein YwqK</fullName>
    </recommendedName>
</protein>
<keyword id="KW-0963">Cytoplasm</keyword>
<keyword id="KW-1185">Reference proteome</keyword>
<keyword id="KW-0800">Toxin</keyword>
<proteinExistence type="evidence at protein level"/>